<reference key="1">
    <citation type="journal article" date="2011" name="J. Bacteriol.">
        <title>Comparative genomics of 28 Salmonella enterica isolates: evidence for CRISPR-mediated adaptive sublineage evolution.</title>
        <authorList>
            <person name="Fricke W.F."/>
            <person name="Mammel M.K."/>
            <person name="McDermott P.F."/>
            <person name="Tartera C."/>
            <person name="White D.G."/>
            <person name="Leclerc J.E."/>
            <person name="Ravel J."/>
            <person name="Cebula T.A."/>
        </authorList>
    </citation>
    <scope>NUCLEOTIDE SEQUENCE [LARGE SCALE GENOMIC DNA]</scope>
    <source>
        <strain>SL476</strain>
    </source>
</reference>
<proteinExistence type="inferred from homology"/>
<protein>
    <recommendedName>
        <fullName evidence="2">N(4)-acetylcytidine amidohydrolase</fullName>
        <shortName evidence="2">ac4C amidohydrolase</shortName>
        <ecNumber evidence="2">3.5.1.135</ecNumber>
    </recommendedName>
</protein>
<gene>
    <name type="primary">yqfB</name>
    <name type="ordered locus">SeHA_C3282</name>
</gene>
<feature type="chain" id="PRO_1000131796" description="N(4)-acetylcytidine amidohydrolase">
    <location>
        <begin position="1"/>
        <end position="103"/>
    </location>
</feature>
<feature type="domain" description="ASCH" evidence="1">
    <location>
        <begin position="6"/>
        <end position="94"/>
    </location>
</feature>
<feature type="active site" description="Proton acceptor" evidence="2">
    <location>
        <position position="21"/>
    </location>
</feature>
<feature type="active site" description="Nucleophile" evidence="2">
    <location>
        <position position="24"/>
    </location>
</feature>
<feature type="active site" description="Proton donor" evidence="2">
    <location>
        <position position="74"/>
    </location>
</feature>
<comment type="function">
    <text evidence="2">Catalyzes the hydrolysis of N(4)-acetylcytidine (ac4C).</text>
</comment>
<comment type="catalytic activity">
    <reaction evidence="2">
        <text>N(4)-acetylcytidine + H2O = cytidine + acetate + H(+)</text>
        <dbReference type="Rhea" id="RHEA:62932"/>
        <dbReference type="ChEBI" id="CHEBI:15377"/>
        <dbReference type="ChEBI" id="CHEBI:15378"/>
        <dbReference type="ChEBI" id="CHEBI:17562"/>
        <dbReference type="ChEBI" id="CHEBI:30089"/>
        <dbReference type="ChEBI" id="CHEBI:70989"/>
        <dbReference type="EC" id="3.5.1.135"/>
    </reaction>
</comment>
<comment type="catalytic activity">
    <reaction evidence="2">
        <text>N(4)-acetyl-2'-deoxycytidine + H2O = 2'-deoxycytidine + acetate + H(+)</text>
        <dbReference type="Rhea" id="RHEA:62936"/>
        <dbReference type="ChEBI" id="CHEBI:15377"/>
        <dbReference type="ChEBI" id="CHEBI:15378"/>
        <dbReference type="ChEBI" id="CHEBI:15698"/>
        <dbReference type="ChEBI" id="CHEBI:30089"/>
        <dbReference type="ChEBI" id="CHEBI:146133"/>
        <dbReference type="EC" id="3.5.1.135"/>
    </reaction>
</comment>
<comment type="catalytic activity">
    <reaction evidence="2">
        <text>N(4)-acetylcytosine + H2O = cytosine + acetate + H(+)</text>
        <dbReference type="Rhea" id="RHEA:62940"/>
        <dbReference type="ChEBI" id="CHEBI:15377"/>
        <dbReference type="ChEBI" id="CHEBI:15378"/>
        <dbReference type="ChEBI" id="CHEBI:16040"/>
        <dbReference type="ChEBI" id="CHEBI:30089"/>
        <dbReference type="ChEBI" id="CHEBI:146134"/>
        <dbReference type="EC" id="3.5.1.135"/>
    </reaction>
</comment>
<comment type="similarity">
    <text evidence="2">Belongs to the N(4)-acetylcytidine amidohydrolase family.</text>
</comment>
<evidence type="ECO:0000255" key="1"/>
<evidence type="ECO:0000255" key="2">
    <source>
        <dbReference type="HAMAP-Rule" id="MF_00684"/>
    </source>
</evidence>
<organism>
    <name type="scientific">Salmonella heidelberg (strain SL476)</name>
    <dbReference type="NCBI Taxonomy" id="454169"/>
    <lineage>
        <taxon>Bacteria</taxon>
        <taxon>Pseudomonadati</taxon>
        <taxon>Pseudomonadota</taxon>
        <taxon>Gammaproteobacteria</taxon>
        <taxon>Enterobacterales</taxon>
        <taxon>Enterobacteriaceae</taxon>
        <taxon>Salmonella</taxon>
    </lineage>
</organism>
<dbReference type="EC" id="3.5.1.135" evidence="2"/>
<dbReference type="EMBL" id="CP001120">
    <property type="protein sequence ID" value="ACF69683.1"/>
    <property type="molecule type" value="Genomic_DNA"/>
</dbReference>
<dbReference type="RefSeq" id="WP_001182976.1">
    <property type="nucleotide sequence ID" value="NC_011083.1"/>
</dbReference>
<dbReference type="SMR" id="B4TGX0"/>
<dbReference type="KEGG" id="seh:SeHA_C3282"/>
<dbReference type="HOGENOM" id="CLU_152586_0_0_6"/>
<dbReference type="Proteomes" id="UP000001866">
    <property type="component" value="Chromosome"/>
</dbReference>
<dbReference type="GO" id="GO:0005829">
    <property type="term" value="C:cytosol"/>
    <property type="evidence" value="ECO:0007669"/>
    <property type="project" value="TreeGrafter"/>
</dbReference>
<dbReference type="GO" id="GO:0016813">
    <property type="term" value="F:hydrolase activity, acting on carbon-nitrogen (but not peptide) bonds, in linear amidines"/>
    <property type="evidence" value="ECO:0007669"/>
    <property type="project" value="UniProtKB-UniRule"/>
</dbReference>
<dbReference type="GO" id="GO:0106251">
    <property type="term" value="F:N4-acetylcytidine amidohydrolase activity"/>
    <property type="evidence" value="ECO:0007669"/>
    <property type="project" value="RHEA"/>
</dbReference>
<dbReference type="CDD" id="cd06552">
    <property type="entry name" value="ASCH_yqfb_like"/>
    <property type="match status" value="1"/>
</dbReference>
<dbReference type="FunFam" id="2.30.130.30:FF:000001">
    <property type="entry name" value="UPF0267 protein YqfB"/>
    <property type="match status" value="1"/>
</dbReference>
<dbReference type="Gene3D" id="2.30.130.30">
    <property type="entry name" value="Hypothetical protein"/>
    <property type="match status" value="1"/>
</dbReference>
<dbReference type="HAMAP" id="MF_00684">
    <property type="entry name" value="ac4C_amidohydr"/>
    <property type="match status" value="1"/>
</dbReference>
<dbReference type="InterPro" id="IPR008314">
    <property type="entry name" value="AC4CH"/>
</dbReference>
<dbReference type="InterPro" id="IPR007374">
    <property type="entry name" value="ASCH_domain"/>
</dbReference>
<dbReference type="InterPro" id="IPR015947">
    <property type="entry name" value="PUA-like_sf"/>
</dbReference>
<dbReference type="NCBIfam" id="NF003443">
    <property type="entry name" value="PRK04980.1"/>
    <property type="match status" value="1"/>
</dbReference>
<dbReference type="PANTHER" id="PTHR38088">
    <property type="entry name" value="UCP029143 FAMILY PROTEIN"/>
    <property type="match status" value="1"/>
</dbReference>
<dbReference type="PANTHER" id="PTHR38088:SF2">
    <property type="entry name" value="UCP029143 FAMILY PROTEIN"/>
    <property type="match status" value="1"/>
</dbReference>
<dbReference type="Pfam" id="PF04266">
    <property type="entry name" value="ASCH"/>
    <property type="match status" value="1"/>
</dbReference>
<dbReference type="PIRSF" id="PIRSF029143">
    <property type="entry name" value="UCP029143"/>
    <property type="match status" value="1"/>
</dbReference>
<dbReference type="SMART" id="SM01022">
    <property type="entry name" value="ASCH"/>
    <property type="match status" value="1"/>
</dbReference>
<dbReference type="SUPFAM" id="SSF88697">
    <property type="entry name" value="PUA domain-like"/>
    <property type="match status" value="1"/>
</dbReference>
<sequence length="103" mass="11899">MQPNDITFFQRFQNDILAGRKTITIRDASESHFKAGDVLRVGRFEDDGYFCTIEVTGTSTVTLDTLNEKHAQQENMSLDELKRVIAEIYPNQTQFYVIDFKCL</sequence>
<name>AC4CH_SALHS</name>
<keyword id="KW-0378">Hydrolase</keyword>
<accession>B4TGX0</accession>